<name>Y1978_STAA8</name>
<protein>
    <recommendedName>
        <fullName>UPF0754 membrane protein SAOUHSC_01978</fullName>
    </recommendedName>
</protein>
<comment type="subcellular location">
    <subcellularLocation>
        <location evidence="1">Cell membrane</location>
        <topology evidence="1">Multi-pass membrane protein</topology>
    </subcellularLocation>
</comment>
<comment type="similarity">
    <text evidence="3">Belongs to the UPF0754 family.</text>
</comment>
<keyword id="KW-1003">Cell membrane</keyword>
<keyword id="KW-0472">Membrane</keyword>
<keyword id="KW-1185">Reference proteome</keyword>
<keyword id="KW-0812">Transmembrane</keyword>
<keyword id="KW-1133">Transmembrane helix</keyword>
<dbReference type="EMBL" id="CP000253">
    <property type="protein sequence ID" value="ABD31037.1"/>
    <property type="molecule type" value="Genomic_DNA"/>
</dbReference>
<dbReference type="RefSeq" id="WP_000992527.1">
    <property type="nucleotide sequence ID" value="NZ_LS483365.1"/>
</dbReference>
<dbReference type="RefSeq" id="YP_500475.1">
    <property type="nucleotide sequence ID" value="NC_007795.1"/>
</dbReference>
<dbReference type="SMR" id="Q2FX99"/>
<dbReference type="STRING" id="93061.SAOUHSC_01978"/>
<dbReference type="PaxDb" id="1280-SAXN108_1875"/>
<dbReference type="GeneID" id="3920454"/>
<dbReference type="KEGG" id="sao:SAOUHSC_01978"/>
<dbReference type="PATRIC" id="fig|93061.5.peg.1799"/>
<dbReference type="eggNOG" id="COG4399">
    <property type="taxonomic scope" value="Bacteria"/>
</dbReference>
<dbReference type="HOGENOM" id="CLU_042384_0_0_9"/>
<dbReference type="OrthoDB" id="9787430at2"/>
<dbReference type="PRO" id="PR:Q2FX99"/>
<dbReference type="Proteomes" id="UP000008816">
    <property type="component" value="Chromosome"/>
</dbReference>
<dbReference type="GO" id="GO:0005886">
    <property type="term" value="C:plasma membrane"/>
    <property type="evidence" value="ECO:0007669"/>
    <property type="project" value="UniProtKB-SubCell"/>
</dbReference>
<dbReference type="InterPro" id="IPR007383">
    <property type="entry name" value="DUF445"/>
</dbReference>
<dbReference type="InterPro" id="IPR016991">
    <property type="entry name" value="UCP032178"/>
</dbReference>
<dbReference type="PANTHER" id="PTHR35791">
    <property type="entry name" value="UPF0754 MEMBRANE PROTEIN YHEB"/>
    <property type="match status" value="1"/>
</dbReference>
<dbReference type="PANTHER" id="PTHR35791:SF1">
    <property type="entry name" value="UPF0754 MEMBRANE PROTEIN YHEB"/>
    <property type="match status" value="1"/>
</dbReference>
<dbReference type="Pfam" id="PF04286">
    <property type="entry name" value="DUF445"/>
    <property type="match status" value="1"/>
</dbReference>
<dbReference type="PIRSF" id="PIRSF032178">
    <property type="entry name" value="UCP032178"/>
    <property type="match status" value="1"/>
</dbReference>
<proteinExistence type="inferred from homology"/>
<reference key="1">
    <citation type="book" date="2006" name="Gram positive pathogens, 2nd edition">
        <title>The Staphylococcus aureus NCTC 8325 genome.</title>
        <editorList>
            <person name="Fischetti V."/>
            <person name="Novick R."/>
            <person name="Ferretti J."/>
            <person name="Portnoy D."/>
            <person name="Rood J."/>
        </editorList>
        <authorList>
            <person name="Gillaspy A.F."/>
            <person name="Worrell V."/>
            <person name="Orvis J."/>
            <person name="Roe B.A."/>
            <person name="Dyer D.W."/>
            <person name="Iandolo J.J."/>
        </authorList>
    </citation>
    <scope>NUCLEOTIDE SEQUENCE [LARGE SCALE GENOMIC DNA]</scope>
    <source>
        <strain>NCTC 8325 / PS 47</strain>
    </source>
</reference>
<sequence>MNALFIIIFMIVVGAIIGGITNVIAIRMLFHPFKPYYIFKFRVPFTPGLIPKRREEIATKIGQVIEEHLLTETLINEKLKSEQSQQAIESMIQQQLQKLTKDQLSIKQITSQIDIDLEQVLQTNGNQYIESQLNNYYTKHQNQTIASLLPNQLVTFLNQHVDNATDLLCDRARNYLSSAKGTQDINDMLDTFFNEKGKLIGMLQMFMTKESIADRIQQELIRLTSHPKARTIVTSLITNEYQTFKDKPLNELLDASQFNEIAENLSVYVTTYASKQANKPVVTLMPQFVDYLEGQLSSKLANLIIEKLSIHLSTIMKKVDLRGLIEEQINTFDLDYIEKLIIEIANKELKLIMSLGFILGGIIGFFQGLVAIFV</sequence>
<gene>
    <name type="ordered locus">SAOUHSC_01978</name>
</gene>
<organism>
    <name type="scientific">Staphylococcus aureus (strain NCTC 8325 / PS 47)</name>
    <dbReference type="NCBI Taxonomy" id="93061"/>
    <lineage>
        <taxon>Bacteria</taxon>
        <taxon>Bacillati</taxon>
        <taxon>Bacillota</taxon>
        <taxon>Bacilli</taxon>
        <taxon>Bacillales</taxon>
        <taxon>Staphylococcaceae</taxon>
        <taxon>Staphylococcus</taxon>
    </lineage>
</organism>
<feature type="chain" id="PRO_0000388314" description="UPF0754 membrane protein SAOUHSC_01978">
    <location>
        <begin position="1"/>
        <end position="374"/>
    </location>
</feature>
<feature type="transmembrane region" description="Helical" evidence="2">
    <location>
        <begin position="4"/>
        <end position="24"/>
    </location>
</feature>
<feature type="transmembrane region" description="Helical" evidence="2">
    <location>
        <begin position="354"/>
        <end position="374"/>
    </location>
</feature>
<accession>Q2FX99</accession>
<evidence type="ECO:0000250" key="1"/>
<evidence type="ECO:0000255" key="2"/>
<evidence type="ECO:0000305" key="3"/>